<organism>
    <name type="scientific">Pseudomonas putida (strain ATCC 47054 / DSM 6125 / CFBP 8728 / NCIMB 11950 / KT2440)</name>
    <dbReference type="NCBI Taxonomy" id="160488"/>
    <lineage>
        <taxon>Bacteria</taxon>
        <taxon>Pseudomonadati</taxon>
        <taxon>Pseudomonadota</taxon>
        <taxon>Gammaproteobacteria</taxon>
        <taxon>Pseudomonadales</taxon>
        <taxon>Pseudomonadaceae</taxon>
        <taxon>Pseudomonas</taxon>
    </lineage>
</organism>
<comment type="similarity">
    <text evidence="1">Belongs to the SfsA family.</text>
</comment>
<evidence type="ECO:0000255" key="1">
    <source>
        <dbReference type="HAMAP-Rule" id="MF_00095"/>
    </source>
</evidence>
<feature type="chain" id="PRO_0000152299" description="Sugar fermentation stimulation protein homolog">
    <location>
        <begin position="1"/>
        <end position="237"/>
    </location>
</feature>
<dbReference type="EMBL" id="AE015451">
    <property type="protein sequence ID" value="AAN70264.1"/>
    <property type="molecule type" value="Genomic_DNA"/>
</dbReference>
<dbReference type="RefSeq" id="NP_746800.1">
    <property type="nucleotide sequence ID" value="NC_002947.4"/>
</dbReference>
<dbReference type="RefSeq" id="WP_004575787.1">
    <property type="nucleotide sequence ID" value="NZ_CP169744.1"/>
</dbReference>
<dbReference type="SMR" id="Q88DX7"/>
<dbReference type="STRING" id="160488.PP_4691"/>
<dbReference type="PaxDb" id="160488-PP_4691"/>
<dbReference type="DNASU" id="1044194"/>
<dbReference type="GeneID" id="83682404"/>
<dbReference type="KEGG" id="ppu:PP_4691"/>
<dbReference type="PATRIC" id="fig|160488.4.peg.4999"/>
<dbReference type="eggNOG" id="COG1489">
    <property type="taxonomic scope" value="Bacteria"/>
</dbReference>
<dbReference type="HOGENOM" id="CLU_052299_2_0_6"/>
<dbReference type="OrthoDB" id="9802365at2"/>
<dbReference type="PhylomeDB" id="Q88DX7"/>
<dbReference type="BioCyc" id="PPUT160488:G1G01-5010-MONOMER"/>
<dbReference type="Proteomes" id="UP000000556">
    <property type="component" value="Chromosome"/>
</dbReference>
<dbReference type="GO" id="GO:0003677">
    <property type="term" value="F:DNA binding"/>
    <property type="evidence" value="ECO:0007669"/>
    <property type="project" value="InterPro"/>
</dbReference>
<dbReference type="CDD" id="cd22359">
    <property type="entry name" value="SfsA-like_bacterial"/>
    <property type="match status" value="1"/>
</dbReference>
<dbReference type="FunFam" id="2.40.50.580:FF:000001">
    <property type="entry name" value="Sugar fermentation stimulation protein A"/>
    <property type="match status" value="1"/>
</dbReference>
<dbReference type="FunFam" id="3.40.1350.60:FF:000001">
    <property type="entry name" value="Sugar fermentation stimulation protein A"/>
    <property type="match status" value="1"/>
</dbReference>
<dbReference type="Gene3D" id="2.40.50.580">
    <property type="match status" value="1"/>
</dbReference>
<dbReference type="Gene3D" id="3.40.1350.60">
    <property type="match status" value="1"/>
</dbReference>
<dbReference type="HAMAP" id="MF_00095">
    <property type="entry name" value="SfsA"/>
    <property type="match status" value="1"/>
</dbReference>
<dbReference type="InterPro" id="IPR005224">
    <property type="entry name" value="SfsA"/>
</dbReference>
<dbReference type="InterPro" id="IPR040452">
    <property type="entry name" value="SfsA_C"/>
</dbReference>
<dbReference type="InterPro" id="IPR041465">
    <property type="entry name" value="SfsA_N"/>
</dbReference>
<dbReference type="NCBIfam" id="TIGR00230">
    <property type="entry name" value="sfsA"/>
    <property type="match status" value="1"/>
</dbReference>
<dbReference type="PANTHER" id="PTHR30545">
    <property type="entry name" value="SUGAR FERMENTATION STIMULATION PROTEIN A"/>
    <property type="match status" value="1"/>
</dbReference>
<dbReference type="PANTHER" id="PTHR30545:SF2">
    <property type="entry name" value="SUGAR FERMENTATION STIMULATION PROTEIN A"/>
    <property type="match status" value="1"/>
</dbReference>
<dbReference type="Pfam" id="PF03749">
    <property type="entry name" value="SfsA"/>
    <property type="match status" value="1"/>
</dbReference>
<dbReference type="Pfam" id="PF17746">
    <property type="entry name" value="SfsA_N"/>
    <property type="match status" value="1"/>
</dbReference>
<reference key="1">
    <citation type="journal article" date="2002" name="Environ. Microbiol.">
        <title>Complete genome sequence and comparative analysis of the metabolically versatile Pseudomonas putida KT2440.</title>
        <authorList>
            <person name="Nelson K.E."/>
            <person name="Weinel C."/>
            <person name="Paulsen I.T."/>
            <person name="Dodson R.J."/>
            <person name="Hilbert H."/>
            <person name="Martins dos Santos V.A.P."/>
            <person name="Fouts D.E."/>
            <person name="Gill S.R."/>
            <person name="Pop M."/>
            <person name="Holmes M."/>
            <person name="Brinkac L.M."/>
            <person name="Beanan M.J."/>
            <person name="DeBoy R.T."/>
            <person name="Daugherty S.C."/>
            <person name="Kolonay J.F."/>
            <person name="Madupu R."/>
            <person name="Nelson W.C."/>
            <person name="White O."/>
            <person name="Peterson J.D."/>
            <person name="Khouri H.M."/>
            <person name="Hance I."/>
            <person name="Chris Lee P."/>
            <person name="Holtzapple E.K."/>
            <person name="Scanlan D."/>
            <person name="Tran K."/>
            <person name="Moazzez A."/>
            <person name="Utterback T.R."/>
            <person name="Rizzo M."/>
            <person name="Lee K."/>
            <person name="Kosack D."/>
            <person name="Moestl D."/>
            <person name="Wedler H."/>
            <person name="Lauber J."/>
            <person name="Stjepandic D."/>
            <person name="Hoheisel J."/>
            <person name="Straetz M."/>
            <person name="Heim S."/>
            <person name="Kiewitz C."/>
            <person name="Eisen J.A."/>
            <person name="Timmis K.N."/>
            <person name="Duesterhoeft A."/>
            <person name="Tuemmler B."/>
            <person name="Fraser C.M."/>
        </authorList>
    </citation>
    <scope>NUCLEOTIDE SEQUENCE [LARGE SCALE GENOMIC DNA]</scope>
    <source>
        <strain>ATCC 47054 / DSM 6125 / CFBP 8728 / NCIMB 11950 / KT2440</strain>
    </source>
</reference>
<name>SFSA_PSEPK</name>
<proteinExistence type="inferred from homology"/>
<sequence length="237" mass="25981">MRFSPSLEQGRLLRRYKRFLADIELASGEQMTIHCPNTGSMLNCMREGGQVWFSRSNDPKRKLPGTWEISETPQGRLACVNTGRANALVEEALRAGTITELAGFTALKREVAYGEEGSRIDFRLEFEGAPAYVEVKSVTLGYPDTAVAAFPDAVTQRGAKHLRELAKLARQGVRAVQLYCVNLTGIDAVRPAEEIDTAYAQALRAAVADGVEVLAYGTRLDAEGIVIDRRLPVLLTP</sequence>
<protein>
    <recommendedName>
        <fullName evidence="1">Sugar fermentation stimulation protein homolog</fullName>
    </recommendedName>
</protein>
<keyword id="KW-1185">Reference proteome</keyword>
<accession>Q88DX7</accession>
<gene>
    <name evidence="1" type="primary">sfsA</name>
    <name type="ordered locus">PP_4691</name>
</gene>